<protein>
    <recommendedName>
        <fullName>MATH domain and coiled-coil domain-containing protein At3g58240</fullName>
    </recommendedName>
    <alternativeName>
        <fullName>RTM3-like protein At3g58240</fullName>
    </alternativeName>
</protein>
<accession>Q9M2J2</accession>
<feature type="chain" id="PRO_0000429295" description="MATH domain and coiled-coil domain-containing protein At3g58240">
    <location>
        <begin position="1"/>
        <end position="317"/>
    </location>
</feature>
<feature type="domain" description="MATH" evidence="2">
    <location>
        <begin position="6"/>
        <end position="131"/>
    </location>
</feature>
<feature type="coiled-coil region" evidence="1">
    <location>
        <begin position="254"/>
        <end position="305"/>
    </location>
</feature>
<keyword id="KW-0175">Coiled coil</keyword>
<keyword id="KW-1185">Reference proteome</keyword>
<reference key="1">
    <citation type="journal article" date="2000" name="Nature">
        <title>Sequence and analysis of chromosome 3 of the plant Arabidopsis thaliana.</title>
        <authorList>
            <person name="Salanoubat M."/>
            <person name="Lemcke K."/>
            <person name="Rieger M."/>
            <person name="Ansorge W."/>
            <person name="Unseld M."/>
            <person name="Fartmann B."/>
            <person name="Valle G."/>
            <person name="Bloecker H."/>
            <person name="Perez-Alonso M."/>
            <person name="Obermaier B."/>
            <person name="Delseny M."/>
            <person name="Boutry M."/>
            <person name="Grivell L.A."/>
            <person name="Mache R."/>
            <person name="Puigdomenech P."/>
            <person name="De Simone V."/>
            <person name="Choisne N."/>
            <person name="Artiguenave F."/>
            <person name="Robert C."/>
            <person name="Brottier P."/>
            <person name="Wincker P."/>
            <person name="Cattolico L."/>
            <person name="Weissenbach J."/>
            <person name="Saurin W."/>
            <person name="Quetier F."/>
            <person name="Schaefer M."/>
            <person name="Mueller-Auer S."/>
            <person name="Gabel C."/>
            <person name="Fuchs M."/>
            <person name="Benes V."/>
            <person name="Wurmbach E."/>
            <person name="Drzonek H."/>
            <person name="Erfle H."/>
            <person name="Jordan N."/>
            <person name="Bangert S."/>
            <person name="Wiedelmann R."/>
            <person name="Kranz H."/>
            <person name="Voss H."/>
            <person name="Holland R."/>
            <person name="Brandt P."/>
            <person name="Nyakatura G."/>
            <person name="Vezzi A."/>
            <person name="D'Angelo M."/>
            <person name="Pallavicini A."/>
            <person name="Toppo S."/>
            <person name="Simionati B."/>
            <person name="Conrad A."/>
            <person name="Hornischer K."/>
            <person name="Kauer G."/>
            <person name="Loehnert T.-H."/>
            <person name="Nordsiek G."/>
            <person name="Reichelt J."/>
            <person name="Scharfe M."/>
            <person name="Schoen O."/>
            <person name="Bargues M."/>
            <person name="Terol J."/>
            <person name="Climent J."/>
            <person name="Navarro P."/>
            <person name="Collado C."/>
            <person name="Perez-Perez A."/>
            <person name="Ottenwaelder B."/>
            <person name="Duchemin D."/>
            <person name="Cooke R."/>
            <person name="Laudie M."/>
            <person name="Berger-Llauro C."/>
            <person name="Purnelle B."/>
            <person name="Masuy D."/>
            <person name="de Haan M."/>
            <person name="Maarse A.C."/>
            <person name="Alcaraz J.-P."/>
            <person name="Cottet A."/>
            <person name="Casacuberta E."/>
            <person name="Monfort A."/>
            <person name="Argiriou A."/>
            <person name="Flores M."/>
            <person name="Liguori R."/>
            <person name="Vitale D."/>
            <person name="Mannhaupt G."/>
            <person name="Haase D."/>
            <person name="Schoof H."/>
            <person name="Rudd S."/>
            <person name="Zaccaria P."/>
            <person name="Mewes H.-W."/>
            <person name="Mayer K.F.X."/>
            <person name="Kaul S."/>
            <person name="Town C.D."/>
            <person name="Koo H.L."/>
            <person name="Tallon L.J."/>
            <person name="Jenkins J."/>
            <person name="Rooney T."/>
            <person name="Rizzo M."/>
            <person name="Walts A."/>
            <person name="Utterback T."/>
            <person name="Fujii C.Y."/>
            <person name="Shea T.P."/>
            <person name="Creasy T.H."/>
            <person name="Haas B."/>
            <person name="Maiti R."/>
            <person name="Wu D."/>
            <person name="Peterson J."/>
            <person name="Van Aken S."/>
            <person name="Pai G."/>
            <person name="Militscher J."/>
            <person name="Sellers P."/>
            <person name="Gill J.E."/>
            <person name="Feldblyum T.V."/>
            <person name="Preuss D."/>
            <person name="Lin X."/>
            <person name="Nierman W.C."/>
            <person name="Salzberg S.L."/>
            <person name="White O."/>
            <person name="Venter J.C."/>
            <person name="Fraser C.M."/>
            <person name="Kaneko T."/>
            <person name="Nakamura Y."/>
            <person name="Sato S."/>
            <person name="Kato T."/>
            <person name="Asamizu E."/>
            <person name="Sasamoto S."/>
            <person name="Kimura T."/>
            <person name="Idesawa K."/>
            <person name="Kawashima K."/>
            <person name="Kishida Y."/>
            <person name="Kiyokawa C."/>
            <person name="Kohara M."/>
            <person name="Matsumoto M."/>
            <person name="Matsuno A."/>
            <person name="Muraki A."/>
            <person name="Nakayama S."/>
            <person name="Nakazaki N."/>
            <person name="Shinpo S."/>
            <person name="Takeuchi C."/>
            <person name="Wada T."/>
            <person name="Watanabe A."/>
            <person name="Yamada M."/>
            <person name="Yasuda M."/>
            <person name="Tabata S."/>
        </authorList>
    </citation>
    <scope>NUCLEOTIDE SEQUENCE [LARGE SCALE GENOMIC DNA]</scope>
    <source>
        <strain>cv. Columbia</strain>
    </source>
</reference>
<reference key="2">
    <citation type="journal article" date="2017" name="Plant J.">
        <title>Araport11: a complete reannotation of the Arabidopsis thaliana reference genome.</title>
        <authorList>
            <person name="Cheng C.Y."/>
            <person name="Krishnakumar V."/>
            <person name="Chan A.P."/>
            <person name="Thibaud-Nissen F."/>
            <person name="Schobel S."/>
            <person name="Town C.D."/>
        </authorList>
    </citation>
    <scope>GENOME REANNOTATION</scope>
    <source>
        <strain>cv. Columbia</strain>
    </source>
</reference>
<reference key="3">
    <citation type="journal article" date="2010" name="Plant Physiol.">
        <title>RTM3, which controls long-distance movement of potyviruses, is a member of a new plant gene family encoding a meprin and TRAF homology domain-containing protein.</title>
        <authorList>
            <person name="Cosson P."/>
            <person name="Sofer L."/>
            <person name="Le Q.H."/>
            <person name="Leger V."/>
            <person name="Schurdi-Levraud V."/>
            <person name="Whitham S.A."/>
            <person name="Yamamoto M.L."/>
            <person name="Gopalan S."/>
            <person name="Le Gall O."/>
            <person name="Candresse T."/>
            <person name="Carrington J.C."/>
            <person name="Revers F."/>
        </authorList>
    </citation>
    <scope>GENE FAMILY</scope>
</reference>
<gene>
    <name type="ordered locus">At3g58240</name>
    <name type="ORF">F9D24.150</name>
</gene>
<evidence type="ECO:0000255" key="1"/>
<evidence type="ECO:0000255" key="2">
    <source>
        <dbReference type="PROSITE-ProRule" id="PRU00129"/>
    </source>
</evidence>
<name>MCC18_ARATH</name>
<proteinExistence type="predicted"/>
<sequence length="317" mass="36427">MGNPVDNKFTWVIKNFCSVSPKPIYSDQFLIGGNKWHILAYSKKRDGHQFLCLDLELVDCEFLPSEWRKVVKVSFTVVNFFSKKLSRQIGLKHCFNKKERSKGGSLFHLSELTDKKSGFLVDGEVEIVAQITVLETDRRFHVSKDYNMEMQCWDGMATTLVENKELNDDDKAGLVNVKGFQVLPSQLGIVNRIFEKHPETALECCTKNQELRASYINVIFSLIKLLYKGAQEHSTHDLSDAEGALAYMKNLGFKLDWLEKKLDEVKEIKKKCERVTEMEKELHDLMNKHTNVSKLLEKEKLEIKNASAPDLSFSDVI</sequence>
<organism>
    <name type="scientific">Arabidopsis thaliana</name>
    <name type="common">Mouse-ear cress</name>
    <dbReference type="NCBI Taxonomy" id="3702"/>
    <lineage>
        <taxon>Eukaryota</taxon>
        <taxon>Viridiplantae</taxon>
        <taxon>Streptophyta</taxon>
        <taxon>Embryophyta</taxon>
        <taxon>Tracheophyta</taxon>
        <taxon>Spermatophyta</taxon>
        <taxon>Magnoliopsida</taxon>
        <taxon>eudicotyledons</taxon>
        <taxon>Gunneridae</taxon>
        <taxon>Pentapetalae</taxon>
        <taxon>rosids</taxon>
        <taxon>malvids</taxon>
        <taxon>Brassicales</taxon>
        <taxon>Brassicaceae</taxon>
        <taxon>Camelineae</taxon>
        <taxon>Arabidopsis</taxon>
    </lineage>
</organism>
<dbReference type="EMBL" id="AL137081">
    <property type="protein sequence ID" value="CAB68162.1"/>
    <property type="molecule type" value="Genomic_DNA"/>
</dbReference>
<dbReference type="EMBL" id="CP002686">
    <property type="protein sequence ID" value="AEE79758.1"/>
    <property type="molecule type" value="Genomic_DNA"/>
</dbReference>
<dbReference type="PIR" id="T45984">
    <property type="entry name" value="T45984"/>
</dbReference>
<dbReference type="RefSeq" id="NP_191383.1">
    <property type="nucleotide sequence ID" value="NM_115686.2"/>
</dbReference>
<dbReference type="SMR" id="Q9M2J2"/>
<dbReference type="FunCoup" id="Q9M2J2">
    <property type="interactions" value="34"/>
</dbReference>
<dbReference type="STRING" id="3702.Q9M2J2"/>
<dbReference type="PaxDb" id="3702-AT3G58240.1"/>
<dbReference type="ProteomicsDB" id="239045"/>
<dbReference type="EnsemblPlants" id="AT3G58240.1">
    <property type="protein sequence ID" value="AT3G58240.1"/>
    <property type="gene ID" value="AT3G58240"/>
</dbReference>
<dbReference type="GeneID" id="824993"/>
<dbReference type="Gramene" id="AT3G58240.1">
    <property type="protein sequence ID" value="AT3G58240.1"/>
    <property type="gene ID" value="AT3G58240"/>
</dbReference>
<dbReference type="KEGG" id="ath:AT3G58240"/>
<dbReference type="Araport" id="AT3G58240"/>
<dbReference type="TAIR" id="AT3G58240"/>
<dbReference type="eggNOG" id="KOG1987">
    <property type="taxonomic scope" value="Eukaryota"/>
</dbReference>
<dbReference type="HOGENOM" id="CLU_026537_0_0_1"/>
<dbReference type="InParanoid" id="Q9M2J2"/>
<dbReference type="OMA" id="KWHILAY"/>
<dbReference type="PhylomeDB" id="Q9M2J2"/>
<dbReference type="PRO" id="PR:Q9M2J2"/>
<dbReference type="Proteomes" id="UP000006548">
    <property type="component" value="Chromosome 3"/>
</dbReference>
<dbReference type="ExpressionAtlas" id="Q9M2J2">
    <property type="expression patterns" value="baseline"/>
</dbReference>
<dbReference type="CDD" id="cd00121">
    <property type="entry name" value="MATH"/>
    <property type="match status" value="1"/>
</dbReference>
<dbReference type="Gene3D" id="2.60.210.10">
    <property type="entry name" value="Apoptosis, Tumor Necrosis Factor Receptor Associated Protein 2, Chain A"/>
    <property type="match status" value="1"/>
</dbReference>
<dbReference type="InterPro" id="IPR050804">
    <property type="entry name" value="MATH-CC_domain_protein"/>
</dbReference>
<dbReference type="InterPro" id="IPR002083">
    <property type="entry name" value="MATH/TRAF_dom"/>
</dbReference>
<dbReference type="InterPro" id="IPR008974">
    <property type="entry name" value="TRAF-like"/>
</dbReference>
<dbReference type="PANTHER" id="PTHR46236">
    <property type="entry name" value="TRAF-LIKE SUPERFAMILY PROTEIN"/>
    <property type="match status" value="1"/>
</dbReference>
<dbReference type="PANTHER" id="PTHR46236:SF9">
    <property type="entry name" value="UBIQUITIN-SPECIFIC PROTEASE FAMILY C19-RELATED PROTEIN"/>
    <property type="match status" value="1"/>
</dbReference>
<dbReference type="Pfam" id="PF22486">
    <property type="entry name" value="MATH_2"/>
    <property type="match status" value="1"/>
</dbReference>
<dbReference type="SUPFAM" id="SSF49599">
    <property type="entry name" value="TRAF domain-like"/>
    <property type="match status" value="1"/>
</dbReference>
<dbReference type="PROSITE" id="PS50144">
    <property type="entry name" value="MATH"/>
    <property type="match status" value="1"/>
</dbReference>